<feature type="chain" id="PRO_1000204039" description="GTPase Der">
    <location>
        <begin position="1"/>
        <end position="436"/>
    </location>
</feature>
<feature type="domain" description="EngA-type G 1">
    <location>
        <begin position="4"/>
        <end position="167"/>
    </location>
</feature>
<feature type="domain" description="EngA-type G 2">
    <location>
        <begin position="174"/>
        <end position="350"/>
    </location>
</feature>
<feature type="domain" description="KH-like" evidence="1">
    <location>
        <begin position="351"/>
        <end position="435"/>
    </location>
</feature>
<feature type="binding site" evidence="1">
    <location>
        <begin position="10"/>
        <end position="17"/>
    </location>
    <ligand>
        <name>GTP</name>
        <dbReference type="ChEBI" id="CHEBI:37565"/>
        <label>1</label>
    </ligand>
</feature>
<feature type="binding site" evidence="1">
    <location>
        <begin position="57"/>
        <end position="61"/>
    </location>
    <ligand>
        <name>GTP</name>
        <dbReference type="ChEBI" id="CHEBI:37565"/>
        <label>1</label>
    </ligand>
</feature>
<feature type="binding site" evidence="1">
    <location>
        <begin position="120"/>
        <end position="123"/>
    </location>
    <ligand>
        <name>GTP</name>
        <dbReference type="ChEBI" id="CHEBI:37565"/>
        <label>1</label>
    </ligand>
</feature>
<feature type="binding site" evidence="1">
    <location>
        <begin position="180"/>
        <end position="187"/>
    </location>
    <ligand>
        <name>GTP</name>
        <dbReference type="ChEBI" id="CHEBI:37565"/>
        <label>2</label>
    </ligand>
</feature>
<feature type="binding site" evidence="1">
    <location>
        <begin position="227"/>
        <end position="231"/>
    </location>
    <ligand>
        <name>GTP</name>
        <dbReference type="ChEBI" id="CHEBI:37565"/>
        <label>2</label>
    </ligand>
</feature>
<feature type="binding site" evidence="1">
    <location>
        <begin position="292"/>
        <end position="295"/>
    </location>
    <ligand>
        <name>GTP</name>
        <dbReference type="ChEBI" id="CHEBI:37565"/>
        <label>2</label>
    </ligand>
</feature>
<accession>C1A8T3</accession>
<name>DER_GEMAT</name>
<keyword id="KW-0342">GTP-binding</keyword>
<keyword id="KW-0547">Nucleotide-binding</keyword>
<keyword id="KW-1185">Reference proteome</keyword>
<keyword id="KW-0677">Repeat</keyword>
<keyword id="KW-0690">Ribosome biogenesis</keyword>
<comment type="function">
    <text evidence="1">GTPase that plays an essential role in the late steps of ribosome biogenesis.</text>
</comment>
<comment type="subunit">
    <text evidence="1">Associates with the 50S ribosomal subunit.</text>
</comment>
<comment type="similarity">
    <text evidence="1">Belongs to the TRAFAC class TrmE-Era-EngA-EngB-Septin-like GTPase superfamily. EngA (Der) GTPase family.</text>
</comment>
<evidence type="ECO:0000255" key="1">
    <source>
        <dbReference type="HAMAP-Rule" id="MF_00195"/>
    </source>
</evidence>
<reference key="1">
    <citation type="submission" date="2006-03" db="EMBL/GenBank/DDBJ databases">
        <title>Complete genome sequence of Gemmatimonas aurantiaca T-27 that represents a novel phylum Gemmatimonadetes.</title>
        <authorList>
            <person name="Takasaki K."/>
            <person name="Ichikawa N."/>
            <person name="Miura H."/>
            <person name="Matsushita S."/>
            <person name="Watanabe Y."/>
            <person name="Oguchi A."/>
            <person name="Ankai A."/>
            <person name="Yashiro I."/>
            <person name="Takahashi M."/>
            <person name="Terui Y."/>
            <person name="Fukui S."/>
            <person name="Yokoyama H."/>
            <person name="Tanikawa S."/>
            <person name="Hanada S."/>
            <person name="Kamagata Y."/>
            <person name="Fujita N."/>
        </authorList>
    </citation>
    <scope>NUCLEOTIDE SEQUENCE [LARGE SCALE GENOMIC DNA]</scope>
    <source>
        <strain>DSM 14586 / JCM 11422 / NBRC 100505 / T-27</strain>
    </source>
</reference>
<organism>
    <name type="scientific">Gemmatimonas aurantiaca (strain DSM 14586 / JCM 11422 / NBRC 100505 / T-27)</name>
    <dbReference type="NCBI Taxonomy" id="379066"/>
    <lineage>
        <taxon>Bacteria</taxon>
        <taxon>Pseudomonadati</taxon>
        <taxon>Gemmatimonadota</taxon>
        <taxon>Gemmatimonadia</taxon>
        <taxon>Gemmatimonadales</taxon>
        <taxon>Gemmatimonadaceae</taxon>
        <taxon>Gemmatimonas</taxon>
    </lineage>
</organism>
<proteinExistence type="inferred from homology"/>
<gene>
    <name evidence="1" type="primary">der</name>
    <name type="synonym">engA</name>
    <name type="ordered locus">GAU_1601</name>
</gene>
<dbReference type="EMBL" id="AP009153">
    <property type="protein sequence ID" value="BAH38643.1"/>
    <property type="molecule type" value="Genomic_DNA"/>
</dbReference>
<dbReference type="RefSeq" id="WP_012683090.1">
    <property type="nucleotide sequence ID" value="NC_012489.1"/>
</dbReference>
<dbReference type="SMR" id="C1A8T3"/>
<dbReference type="STRING" id="379066.GAU_1601"/>
<dbReference type="KEGG" id="gau:GAU_1601"/>
<dbReference type="eggNOG" id="COG1160">
    <property type="taxonomic scope" value="Bacteria"/>
</dbReference>
<dbReference type="HOGENOM" id="CLU_016077_6_2_0"/>
<dbReference type="OrthoDB" id="9805918at2"/>
<dbReference type="Proteomes" id="UP000002209">
    <property type="component" value="Chromosome"/>
</dbReference>
<dbReference type="GO" id="GO:0005525">
    <property type="term" value="F:GTP binding"/>
    <property type="evidence" value="ECO:0007669"/>
    <property type="project" value="UniProtKB-UniRule"/>
</dbReference>
<dbReference type="GO" id="GO:0043022">
    <property type="term" value="F:ribosome binding"/>
    <property type="evidence" value="ECO:0007669"/>
    <property type="project" value="TreeGrafter"/>
</dbReference>
<dbReference type="GO" id="GO:0042254">
    <property type="term" value="P:ribosome biogenesis"/>
    <property type="evidence" value="ECO:0007669"/>
    <property type="project" value="UniProtKB-KW"/>
</dbReference>
<dbReference type="CDD" id="cd01894">
    <property type="entry name" value="EngA1"/>
    <property type="match status" value="1"/>
</dbReference>
<dbReference type="CDD" id="cd01895">
    <property type="entry name" value="EngA2"/>
    <property type="match status" value="1"/>
</dbReference>
<dbReference type="FunFam" id="3.30.300.20:FF:000004">
    <property type="entry name" value="GTPase Der"/>
    <property type="match status" value="1"/>
</dbReference>
<dbReference type="FunFam" id="3.40.50.300:FF:000040">
    <property type="entry name" value="GTPase Der"/>
    <property type="match status" value="1"/>
</dbReference>
<dbReference type="FunFam" id="3.40.50.300:FF:000057">
    <property type="entry name" value="GTPase Der"/>
    <property type="match status" value="1"/>
</dbReference>
<dbReference type="Gene3D" id="3.30.300.20">
    <property type="match status" value="1"/>
</dbReference>
<dbReference type="Gene3D" id="3.40.50.300">
    <property type="entry name" value="P-loop containing nucleotide triphosphate hydrolases"/>
    <property type="match status" value="2"/>
</dbReference>
<dbReference type="HAMAP" id="MF_00195">
    <property type="entry name" value="GTPase_Der"/>
    <property type="match status" value="1"/>
</dbReference>
<dbReference type="InterPro" id="IPR031166">
    <property type="entry name" value="G_ENGA"/>
</dbReference>
<dbReference type="InterPro" id="IPR006073">
    <property type="entry name" value="GTP-bd"/>
</dbReference>
<dbReference type="InterPro" id="IPR016484">
    <property type="entry name" value="GTPase_Der"/>
</dbReference>
<dbReference type="InterPro" id="IPR032859">
    <property type="entry name" value="KH_dom-like"/>
</dbReference>
<dbReference type="InterPro" id="IPR015946">
    <property type="entry name" value="KH_dom-like_a/b"/>
</dbReference>
<dbReference type="InterPro" id="IPR027417">
    <property type="entry name" value="P-loop_NTPase"/>
</dbReference>
<dbReference type="InterPro" id="IPR005225">
    <property type="entry name" value="Small_GTP-bd"/>
</dbReference>
<dbReference type="NCBIfam" id="TIGR03594">
    <property type="entry name" value="GTPase_EngA"/>
    <property type="match status" value="1"/>
</dbReference>
<dbReference type="NCBIfam" id="TIGR00231">
    <property type="entry name" value="small_GTP"/>
    <property type="match status" value="2"/>
</dbReference>
<dbReference type="PANTHER" id="PTHR43834">
    <property type="entry name" value="GTPASE DER"/>
    <property type="match status" value="1"/>
</dbReference>
<dbReference type="PANTHER" id="PTHR43834:SF6">
    <property type="entry name" value="GTPASE DER"/>
    <property type="match status" value="1"/>
</dbReference>
<dbReference type="Pfam" id="PF14714">
    <property type="entry name" value="KH_dom-like"/>
    <property type="match status" value="1"/>
</dbReference>
<dbReference type="Pfam" id="PF01926">
    <property type="entry name" value="MMR_HSR1"/>
    <property type="match status" value="2"/>
</dbReference>
<dbReference type="PIRSF" id="PIRSF006485">
    <property type="entry name" value="GTP-binding_EngA"/>
    <property type="match status" value="1"/>
</dbReference>
<dbReference type="PRINTS" id="PR00326">
    <property type="entry name" value="GTP1OBG"/>
</dbReference>
<dbReference type="SUPFAM" id="SSF52540">
    <property type="entry name" value="P-loop containing nucleoside triphosphate hydrolases"/>
    <property type="match status" value="2"/>
</dbReference>
<dbReference type="PROSITE" id="PS51712">
    <property type="entry name" value="G_ENGA"/>
    <property type="match status" value="2"/>
</dbReference>
<sequence>MSLPVVAVVGRPNVGKSHLFNRVIGEATAIVSDEAGTTRDRHFGEAEWAGRQFWLVDTGGLVEDSHLLMDTAIRRQVMQAIEEADLMLFVVDAKVGVHPSDARIVDILRNSQKPWMLVANKVDDPASTDFYEFFRLGVTDVYPVSAQNGKGSGDLLDAVVANIPEVEEEERDAVRVAVIGRPNVGKSSFVNRLLGEDRLVVSDESGTTRDAIDAPMRYHDTDLVFVDTAGLRRQSRIDDGVEFYSALRTRRAIDSSDVCILMIDATEGLQNQDLKIATMAWEAGRGLILVINKWDLYEDKTDKSADKFKKEAVEKVPYLKFVPFLFTSAISGQRVTKVLDIVLSVQEQRTRRISTSEVNDALGDLLARLQPPQAAGREVKLNYATQVEIEPPTIAVFGNNPEAIPEHYVRFLHNGFRERWGFTGAPLRIILRRKNS</sequence>
<protein>
    <recommendedName>
        <fullName evidence="1">GTPase Der</fullName>
    </recommendedName>
    <alternativeName>
        <fullName evidence="1">GTP-binding protein EngA</fullName>
    </alternativeName>
</protein>